<evidence type="ECO:0000250" key="1"/>
<evidence type="ECO:0000255" key="2"/>
<evidence type="ECO:0000256" key="3">
    <source>
        <dbReference type="SAM" id="MobiDB-lite"/>
    </source>
</evidence>
<evidence type="ECO:0000305" key="4"/>
<organism>
    <name type="scientific">Pongo pygmaeus</name>
    <name type="common">Bornean orangutan</name>
    <dbReference type="NCBI Taxonomy" id="9600"/>
    <lineage>
        <taxon>Eukaryota</taxon>
        <taxon>Metazoa</taxon>
        <taxon>Chordata</taxon>
        <taxon>Craniata</taxon>
        <taxon>Vertebrata</taxon>
        <taxon>Euteleostomi</taxon>
        <taxon>Mammalia</taxon>
        <taxon>Eutheria</taxon>
        <taxon>Euarchontoglires</taxon>
        <taxon>Primates</taxon>
        <taxon>Haplorrhini</taxon>
        <taxon>Catarrhini</taxon>
        <taxon>Hominidae</taxon>
        <taxon>Pongo</taxon>
    </lineage>
</organism>
<feature type="signal peptide" evidence="2">
    <location>
        <begin position="1"/>
        <end position="23"/>
    </location>
</feature>
<feature type="chain" id="PRO_0000032366" description="Semenogelin-2">
    <location>
        <begin position="24"/>
        <end position="581"/>
    </location>
</feature>
<feature type="region of interest" description="Disordered" evidence="3">
    <location>
        <begin position="24"/>
        <end position="62"/>
    </location>
</feature>
<feature type="region of interest" description="Disordered" evidence="3">
    <location>
        <begin position="132"/>
        <end position="157"/>
    </location>
</feature>
<feature type="region of interest" description="Disordered" evidence="3">
    <location>
        <begin position="173"/>
        <end position="194"/>
    </location>
</feature>
<feature type="region of interest" description="Disordered" evidence="3">
    <location>
        <begin position="271"/>
        <end position="581"/>
    </location>
</feature>
<feature type="compositionally biased region" description="Polar residues" evidence="3">
    <location>
        <begin position="138"/>
        <end position="157"/>
    </location>
</feature>
<feature type="compositionally biased region" description="Polar residues" evidence="3">
    <location>
        <begin position="174"/>
        <end position="194"/>
    </location>
</feature>
<feature type="compositionally biased region" description="Basic and acidic residues" evidence="3">
    <location>
        <begin position="291"/>
        <end position="310"/>
    </location>
</feature>
<feature type="compositionally biased region" description="Polar residues" evidence="3">
    <location>
        <begin position="324"/>
        <end position="333"/>
    </location>
</feature>
<feature type="compositionally biased region" description="Basic and acidic residues" evidence="3">
    <location>
        <begin position="334"/>
        <end position="344"/>
    </location>
</feature>
<feature type="compositionally biased region" description="Polar residues" evidence="3">
    <location>
        <begin position="366"/>
        <end position="396"/>
    </location>
</feature>
<feature type="compositionally biased region" description="Basic and acidic residues" evidence="3">
    <location>
        <begin position="412"/>
        <end position="425"/>
    </location>
</feature>
<feature type="compositionally biased region" description="Basic and acidic residues" evidence="3">
    <location>
        <begin position="455"/>
        <end position="464"/>
    </location>
</feature>
<feature type="compositionally biased region" description="Polar residues" evidence="3">
    <location>
        <begin position="481"/>
        <end position="497"/>
    </location>
</feature>
<feature type="compositionally biased region" description="Polar residues" evidence="3">
    <location>
        <begin position="505"/>
        <end position="529"/>
    </location>
</feature>
<feature type="compositionally biased region" description="Basic and acidic residues" evidence="3">
    <location>
        <begin position="530"/>
        <end position="545"/>
    </location>
</feature>
<feature type="compositionally biased region" description="Basic and acidic residues" evidence="3">
    <location>
        <begin position="558"/>
        <end position="581"/>
    </location>
</feature>
<feature type="sequence conflict" description="In Ref. 2; AAV51946." evidence="4" ref="2">
    <original>S</original>
    <variation>L</variation>
    <location>
        <position position="32"/>
    </location>
</feature>
<feature type="sequence conflict" description="In Ref. 2; AAV51946." evidence="4" ref="2">
    <original>H</original>
    <variation>R</variation>
    <location>
        <position position="56"/>
    </location>
</feature>
<feature type="sequence conflict" description="In Ref. 2; AAV51946." evidence="4" ref="2">
    <original>E</original>
    <variation>K</variation>
    <location>
        <position position="81"/>
    </location>
</feature>
<feature type="sequence conflict" description="In Ref. 2; AAV51946." evidence="4" ref="2">
    <original>R</original>
    <variation>K</variation>
    <location>
        <position position="153"/>
    </location>
</feature>
<feature type="sequence conflict" description="In Ref. 2; AAV51946." evidence="4" ref="2">
    <original>D</original>
    <variation>N</variation>
    <location>
        <position position="423"/>
    </location>
</feature>
<feature type="sequence conflict" description="In Ref. 2; AAV51946." evidence="4" ref="2">
    <original>T</original>
    <variation>A</variation>
    <location>
        <position position="484"/>
    </location>
</feature>
<feature type="sequence conflict" description="In Ref. 2; AAV51946." evidence="4" ref="2">
    <original>A</original>
    <variation>E</variation>
    <location>
        <position position="551"/>
    </location>
</feature>
<keyword id="KW-0677">Repeat</keyword>
<keyword id="KW-0964">Secreted</keyword>
<keyword id="KW-0732">Signal</keyword>
<sequence length="581" mass="65733">MKSIILFVLSLLLILEKQAAVMGQKGGSKGQSPSGSSQFPHGQKGQHYFGQKDQQHTKSKGSFSIQHTYHVDVNDHDRTRESQQYDLNALHKTRKSKQHLGGSQELLNYKQEGRDHDKSKGHFHMIVIHHKGGKAHRGTQNPSQDQGNSPSGRGISSQYSNTEKRLWVHGLSKEQASASGAQKGRTQGRSQSSYVLQTEELVANKQRETQNSHQNKGHYQNVVEVREKHSSKLQTSLRPAYQDRLQHGPKDIFTTQGELLVYDKNQHQTKNLNQDQEHGRKAHKISYQSSHTEERQLNHGEKSVQKDISKGRISIQTEEKIHGKSQNQVTIHSQDQEHGHKENKMSYQSSSTEERHLNCGEKGIQKSVSKGSISIQTEEQIHGKSQNQVRIPSQAQEYGHKENKISYQSSSTEERRLNSGEKDIQKGVSKGSISIQTEEKIHGKSQDQVTIPSQDQEHGHKENKMSYQSSSTEERRLNYGGKNTQKDVSQSSISFQTEKLVEGKSQIQTPNPNQDQWSGQNAKGKSGQSADREQDLLSHEQKGRYQQESSAARNIVITEHEVARDDHLTQQYNEDRNPIST</sequence>
<comment type="function">
    <text evidence="1">Participates in the formation of a gel matrix (sperm coagulum) entrapping the accessory gland secretions and ejaculated spermatozoa.</text>
</comment>
<comment type="subunit">
    <text evidence="1">Interacts with SERPINA5.</text>
</comment>
<comment type="subcellular location">
    <subcellularLocation>
        <location evidence="1">Secreted</location>
    </subcellularLocation>
</comment>
<comment type="similarity">
    <text evidence="4">Belongs to the semenogelin family.</text>
</comment>
<gene>
    <name type="primary">SEMG2</name>
</gene>
<name>SEMG2_PONPY</name>
<proteinExistence type="evidence at transcript level"/>
<reference key="1">
    <citation type="journal article" date="2003" name="J. Mol. Evol.">
        <title>Evolution of the hominoid semenogelin genes, the major proteins of ejaculated semen.</title>
        <authorList>
            <person name="Jensen-Seaman M.I."/>
            <person name="Li W.-H."/>
        </authorList>
    </citation>
    <scope>NUCLEOTIDE SEQUENCE [GENOMIC DNA]</scope>
</reference>
<reference key="2">
    <citation type="journal article" date="2004" name="Nat. Genet.">
        <title>Rate of molecular evolution of the seminal protein gene SEMG2 correlates with levels of female promiscuity.</title>
        <authorList>
            <person name="Dorus S."/>
            <person name="Evans P.D."/>
            <person name="Wyckoff G.J."/>
            <person name="Choi S.S."/>
            <person name="Lahn B.T."/>
        </authorList>
    </citation>
    <scope>NUCLEOTIDE SEQUENCE [MRNA]</scope>
</reference>
<dbReference type="EMBL" id="AY259290">
    <property type="protein sequence ID" value="AAP86628.1"/>
    <property type="molecule type" value="Genomic_DNA"/>
</dbReference>
<dbReference type="EMBL" id="AY781388">
    <property type="protein sequence ID" value="AAV51946.1"/>
    <property type="molecule type" value="mRNA"/>
</dbReference>
<dbReference type="SMR" id="P0C7A5"/>
<dbReference type="GO" id="GO:0070062">
    <property type="term" value="C:extracellular exosome"/>
    <property type="evidence" value="ECO:0007669"/>
    <property type="project" value="TreeGrafter"/>
</dbReference>
<dbReference type="GO" id="GO:0050817">
    <property type="term" value="P:coagulation"/>
    <property type="evidence" value="ECO:0007669"/>
    <property type="project" value="InterPro"/>
</dbReference>
<dbReference type="GO" id="GO:1901318">
    <property type="term" value="P:negative regulation of flagellated sperm motility"/>
    <property type="evidence" value="ECO:0007669"/>
    <property type="project" value="InterPro"/>
</dbReference>
<dbReference type="GO" id="GO:0048240">
    <property type="term" value="P:sperm capacitation"/>
    <property type="evidence" value="ECO:0007669"/>
    <property type="project" value="TreeGrafter"/>
</dbReference>
<dbReference type="InterPro" id="IPR008836">
    <property type="entry name" value="Semenogelin"/>
</dbReference>
<dbReference type="PANTHER" id="PTHR10547:SF6">
    <property type="entry name" value="SEMENOGELIN-2"/>
    <property type="match status" value="1"/>
</dbReference>
<dbReference type="PANTHER" id="PTHR10547">
    <property type="entry name" value="SEMENOGELIN/SEMINAL VESICLE SECRETORY PROTEIN"/>
    <property type="match status" value="1"/>
</dbReference>
<dbReference type="Pfam" id="PF05474">
    <property type="entry name" value="Semenogelin"/>
    <property type="match status" value="1"/>
</dbReference>
<protein>
    <recommendedName>
        <fullName>Semenogelin-2</fullName>
    </recommendedName>
    <alternativeName>
        <fullName>Semenogelin II</fullName>
        <shortName>SGII</shortName>
    </alternativeName>
</protein>
<accession>P0C7A5</accession>
<accession>A4K2V6</accession>
<accession>Q5U7N2</accession>
<accession>Q6X2M4</accession>